<feature type="chain" id="PRO_0000419089" description="Large ribosomal subunit protein eL20">
    <location>
        <begin position="1"/>
        <end position="57"/>
    </location>
</feature>
<feature type="region of interest" description="Disordered" evidence="2">
    <location>
        <begin position="1"/>
        <end position="21"/>
    </location>
</feature>
<feature type="compositionally biased region" description="Polar residues" evidence="2">
    <location>
        <begin position="1"/>
        <end position="10"/>
    </location>
</feature>
<proteinExistence type="inferred from homology"/>
<evidence type="ECO:0000255" key="1">
    <source>
        <dbReference type="HAMAP-Rule" id="MF_00273"/>
    </source>
</evidence>
<evidence type="ECO:0000256" key="2">
    <source>
        <dbReference type="SAM" id="MobiDB-lite"/>
    </source>
</evidence>
<evidence type="ECO:0000305" key="3"/>
<protein>
    <recommendedName>
        <fullName evidence="1">Large ribosomal subunit protein eL20</fullName>
    </recommendedName>
    <alternativeName>
        <fullName evidence="3">50S ribosomal protein L18Ae</fullName>
    </alternativeName>
    <alternativeName>
        <fullName evidence="1">50S ribosomal protein L20e</fullName>
    </alternativeName>
    <alternativeName>
        <fullName evidence="1">50S ribosomal protein LX</fullName>
    </alternativeName>
</protein>
<keyword id="KW-1185">Reference proteome</keyword>
<keyword id="KW-0687">Ribonucleoprotein</keyword>
<keyword id="KW-0689">Ribosomal protein</keyword>
<keyword id="KW-0694">RNA-binding</keyword>
<keyword id="KW-0699">rRNA-binding</keyword>
<accession>C7P2N1</accession>
<dbReference type="EMBL" id="CP001688">
    <property type="protein sequence ID" value="ACV47353.1"/>
    <property type="molecule type" value="Genomic_DNA"/>
</dbReference>
<dbReference type="RefSeq" id="WP_015762199.1">
    <property type="nucleotide sequence ID" value="NC_013202.1"/>
</dbReference>
<dbReference type="SMR" id="C7P2N1"/>
<dbReference type="STRING" id="485914.Hmuk_1231"/>
<dbReference type="GeneID" id="42179136"/>
<dbReference type="GeneID" id="8410751"/>
<dbReference type="KEGG" id="hmu:Hmuk_1231"/>
<dbReference type="eggNOG" id="arCOG04175">
    <property type="taxonomic scope" value="Archaea"/>
</dbReference>
<dbReference type="HOGENOM" id="CLU_177460_1_0_2"/>
<dbReference type="OrthoDB" id="191241at2157"/>
<dbReference type="Proteomes" id="UP000001746">
    <property type="component" value="Chromosome"/>
</dbReference>
<dbReference type="GO" id="GO:1990904">
    <property type="term" value="C:ribonucleoprotein complex"/>
    <property type="evidence" value="ECO:0007669"/>
    <property type="project" value="UniProtKB-KW"/>
</dbReference>
<dbReference type="GO" id="GO:0005840">
    <property type="term" value="C:ribosome"/>
    <property type="evidence" value="ECO:0007669"/>
    <property type="project" value="UniProtKB-KW"/>
</dbReference>
<dbReference type="GO" id="GO:0070180">
    <property type="term" value="F:large ribosomal subunit rRNA binding"/>
    <property type="evidence" value="ECO:0007669"/>
    <property type="project" value="UniProtKB-UniRule"/>
</dbReference>
<dbReference type="GO" id="GO:0003735">
    <property type="term" value="F:structural constituent of ribosome"/>
    <property type="evidence" value="ECO:0007669"/>
    <property type="project" value="InterPro"/>
</dbReference>
<dbReference type="GO" id="GO:0006412">
    <property type="term" value="P:translation"/>
    <property type="evidence" value="ECO:0007669"/>
    <property type="project" value="UniProtKB-UniRule"/>
</dbReference>
<dbReference type="Gene3D" id="3.10.20.10">
    <property type="match status" value="1"/>
</dbReference>
<dbReference type="HAMAP" id="MF_00273">
    <property type="entry name" value="Ribosomal_eL20"/>
    <property type="match status" value="1"/>
</dbReference>
<dbReference type="InterPro" id="IPR028877">
    <property type="entry name" value="Ribosomal_eL20"/>
</dbReference>
<dbReference type="InterPro" id="IPR023573">
    <property type="entry name" value="Ribosomal_eL20_dom"/>
</dbReference>
<dbReference type="NCBIfam" id="NF001981">
    <property type="entry name" value="PRK00773.1-1"/>
    <property type="match status" value="1"/>
</dbReference>
<dbReference type="Pfam" id="PF01775">
    <property type="entry name" value="Ribosomal_L18A"/>
    <property type="match status" value="1"/>
</dbReference>
<dbReference type="SUPFAM" id="SSF160374">
    <property type="entry name" value="RplX-like"/>
    <property type="match status" value="1"/>
</dbReference>
<reference key="1">
    <citation type="journal article" date="2009" name="Stand. Genomic Sci.">
        <title>Complete genome sequence of Halomicrobium mukohataei type strain (arg-2).</title>
        <authorList>
            <person name="Tindall B.J."/>
            <person name="Schneider S."/>
            <person name="Lapidus A."/>
            <person name="Copeland A."/>
            <person name="Glavina Del Rio T."/>
            <person name="Nolan M."/>
            <person name="Lucas S."/>
            <person name="Chen F."/>
            <person name="Tice H."/>
            <person name="Cheng J.F."/>
            <person name="Saunders E."/>
            <person name="Bruce D."/>
            <person name="Goodwin L."/>
            <person name="Pitluck S."/>
            <person name="Mikhailova N."/>
            <person name="Pati A."/>
            <person name="Ivanova N."/>
            <person name="Mavrommatis K."/>
            <person name="Chen A."/>
            <person name="Palaniappan K."/>
            <person name="Chain P."/>
            <person name="Land M."/>
            <person name="Hauser L."/>
            <person name="Chang Y.J."/>
            <person name="Jeffries C.D."/>
            <person name="Brettin T."/>
            <person name="Han C."/>
            <person name="Rohde M."/>
            <person name="Goker M."/>
            <person name="Bristow J."/>
            <person name="Eisen J.A."/>
            <person name="Markowitz V."/>
            <person name="Hugenholtz P."/>
            <person name="Klenk H.P."/>
            <person name="Kyrpides N.C."/>
            <person name="Detter J.C."/>
        </authorList>
    </citation>
    <scope>NUCLEOTIDE SEQUENCE [LARGE SCALE GENOMIC DNA]</scope>
    <source>
        <strain>ATCC 700874 / DSM 12286 / JCM 9738 / NCIMB 13541</strain>
    </source>
</reference>
<gene>
    <name evidence="1" type="primary">rpl18a</name>
    <name evidence="1" type="synonym">rpl20e</name>
    <name evidence="1" type="synonym">rplX</name>
    <name type="ordered locus">Hmuk_1231</name>
</gene>
<comment type="subunit">
    <text evidence="1">Part of the 50S ribosomal subunit. Binds 23S rRNA.</text>
</comment>
<comment type="similarity">
    <text evidence="1">Belongs to the eukaryotic ribosomal protein eL20 family.</text>
</comment>
<name>RL18A_HALMD</name>
<organism>
    <name type="scientific">Halomicrobium mukohataei (strain ATCC 700874 / DSM 12286 / JCM 9738 / NCIMB 13541)</name>
    <name type="common">Haloarcula mukohataei</name>
    <dbReference type="NCBI Taxonomy" id="485914"/>
    <lineage>
        <taxon>Archaea</taxon>
        <taxon>Methanobacteriati</taxon>
        <taxon>Methanobacteriota</taxon>
        <taxon>Stenosarchaea group</taxon>
        <taxon>Halobacteria</taxon>
        <taxon>Halobacteriales</taxon>
        <taxon>Haloarculaceae</taxon>
        <taxon>Halomicrobium</taxon>
    </lineage>
</organism>
<sequence length="57" mass="6318">MSEFTVTGTFESRDGNQPFEKTVEAPNENVARDRAFAAFGSEHGLKRTQVEISEVAQ</sequence>